<accession>P50918</accession>
<accession>Q9CGG2</accession>
<proteinExistence type="evidence at protein level"/>
<keyword id="KW-0963">Cytoplasm</keyword>
<keyword id="KW-0903">Direct protein sequencing</keyword>
<keyword id="KW-0312">Gluconeogenesis</keyword>
<keyword id="KW-0324">Glycolysis</keyword>
<keyword id="KW-0413">Isomerase</keyword>
<keyword id="KW-1185">Reference proteome</keyword>
<name>TPIS_LACLA</name>
<sequence>MSRKPIIAGNWKMNKTLSEAQAFVEAVKNNLPSSDNVESVIGAPALFLAPMAYLRQGSELKLAAENSYFENAGAFTGENSPAAIVDLGVEYIIIGHSERREYFHETDEDINKKAKAIFAAGATPILCCGETLETFEAGKTAEWVSGQIEAGLAGLSAEQVSNLVIAYEPIWAIGTGKTATNEIADETCGVVRSTVEKLYGKEVSEAVRIQYGGSVKPETIEGLMAKENIDGALVGGASLEADSFLALLEMYK</sequence>
<dbReference type="EC" id="5.3.1.1" evidence="1"/>
<dbReference type="EMBL" id="U07640">
    <property type="protein sequence ID" value="AAC43268.1"/>
    <property type="molecule type" value="Genomic_DNA"/>
</dbReference>
<dbReference type="EMBL" id="AE005176">
    <property type="protein sequence ID" value="AAK05232.1"/>
    <property type="molecule type" value="Genomic_DNA"/>
</dbReference>
<dbReference type="PIR" id="F86766">
    <property type="entry name" value="F86766"/>
</dbReference>
<dbReference type="RefSeq" id="NP_267290.1">
    <property type="nucleotide sequence ID" value="NC_002662.1"/>
</dbReference>
<dbReference type="RefSeq" id="WP_003132078.1">
    <property type="nucleotide sequence ID" value="NC_002662.1"/>
</dbReference>
<dbReference type="SMR" id="P50918"/>
<dbReference type="PaxDb" id="272623-L0006"/>
<dbReference type="EnsemblBacteria" id="AAK05232">
    <property type="protein sequence ID" value="AAK05232"/>
    <property type="gene ID" value="L0006"/>
</dbReference>
<dbReference type="GeneID" id="89633253"/>
<dbReference type="KEGG" id="lla:L0006"/>
<dbReference type="PATRIC" id="fig|272623.7.peg.1212"/>
<dbReference type="eggNOG" id="COG0149">
    <property type="taxonomic scope" value="Bacteria"/>
</dbReference>
<dbReference type="HOGENOM" id="CLU_024251_2_3_9"/>
<dbReference type="OrthoDB" id="9809429at2"/>
<dbReference type="BioCyc" id="MetaCyc:MONOMER-13055"/>
<dbReference type="UniPathway" id="UPA00109">
    <property type="reaction ID" value="UER00189"/>
</dbReference>
<dbReference type="UniPathway" id="UPA00138"/>
<dbReference type="Proteomes" id="UP000002196">
    <property type="component" value="Chromosome"/>
</dbReference>
<dbReference type="GO" id="GO:0005829">
    <property type="term" value="C:cytosol"/>
    <property type="evidence" value="ECO:0007669"/>
    <property type="project" value="TreeGrafter"/>
</dbReference>
<dbReference type="GO" id="GO:0004807">
    <property type="term" value="F:triose-phosphate isomerase activity"/>
    <property type="evidence" value="ECO:0007669"/>
    <property type="project" value="UniProtKB-UniRule"/>
</dbReference>
<dbReference type="GO" id="GO:0006094">
    <property type="term" value="P:gluconeogenesis"/>
    <property type="evidence" value="ECO:0007669"/>
    <property type="project" value="UniProtKB-UniRule"/>
</dbReference>
<dbReference type="GO" id="GO:0046166">
    <property type="term" value="P:glyceraldehyde-3-phosphate biosynthetic process"/>
    <property type="evidence" value="ECO:0007669"/>
    <property type="project" value="TreeGrafter"/>
</dbReference>
<dbReference type="GO" id="GO:0019563">
    <property type="term" value="P:glycerol catabolic process"/>
    <property type="evidence" value="ECO:0007669"/>
    <property type="project" value="TreeGrafter"/>
</dbReference>
<dbReference type="GO" id="GO:0006096">
    <property type="term" value="P:glycolytic process"/>
    <property type="evidence" value="ECO:0007669"/>
    <property type="project" value="UniProtKB-UniRule"/>
</dbReference>
<dbReference type="CDD" id="cd00311">
    <property type="entry name" value="TIM"/>
    <property type="match status" value="1"/>
</dbReference>
<dbReference type="FunFam" id="3.20.20.70:FF:000016">
    <property type="entry name" value="Triosephosphate isomerase"/>
    <property type="match status" value="1"/>
</dbReference>
<dbReference type="Gene3D" id="3.20.20.70">
    <property type="entry name" value="Aldolase class I"/>
    <property type="match status" value="1"/>
</dbReference>
<dbReference type="HAMAP" id="MF_00147_B">
    <property type="entry name" value="TIM_B"/>
    <property type="match status" value="1"/>
</dbReference>
<dbReference type="InterPro" id="IPR013785">
    <property type="entry name" value="Aldolase_TIM"/>
</dbReference>
<dbReference type="InterPro" id="IPR035990">
    <property type="entry name" value="TIM_sf"/>
</dbReference>
<dbReference type="InterPro" id="IPR022896">
    <property type="entry name" value="TrioseP_Isoase_bac/euk"/>
</dbReference>
<dbReference type="InterPro" id="IPR000652">
    <property type="entry name" value="Triosephosphate_isomerase"/>
</dbReference>
<dbReference type="InterPro" id="IPR020861">
    <property type="entry name" value="Triosephosphate_isomerase_AS"/>
</dbReference>
<dbReference type="NCBIfam" id="TIGR00419">
    <property type="entry name" value="tim"/>
    <property type="match status" value="1"/>
</dbReference>
<dbReference type="PANTHER" id="PTHR21139">
    <property type="entry name" value="TRIOSEPHOSPHATE ISOMERASE"/>
    <property type="match status" value="1"/>
</dbReference>
<dbReference type="PANTHER" id="PTHR21139:SF42">
    <property type="entry name" value="TRIOSEPHOSPHATE ISOMERASE"/>
    <property type="match status" value="1"/>
</dbReference>
<dbReference type="Pfam" id="PF00121">
    <property type="entry name" value="TIM"/>
    <property type="match status" value="1"/>
</dbReference>
<dbReference type="SUPFAM" id="SSF51351">
    <property type="entry name" value="Triosephosphate isomerase (TIM)"/>
    <property type="match status" value="1"/>
</dbReference>
<dbReference type="PROSITE" id="PS00171">
    <property type="entry name" value="TIM_1"/>
    <property type="match status" value="1"/>
</dbReference>
<dbReference type="PROSITE" id="PS51440">
    <property type="entry name" value="TIM_2"/>
    <property type="match status" value="1"/>
</dbReference>
<reference key="1">
    <citation type="journal article" date="1995" name="Microbiology">
        <title>The Lactococcus lactis triosephosphate isomerase gene, tpi, is monocistronic.</title>
        <authorList>
            <person name="Cancilla M.R."/>
            <person name="Davidson B.E."/>
            <person name="Hillier A.J."/>
            <person name="Nguyen N.Y."/>
            <person name="Thompson J."/>
        </authorList>
    </citation>
    <scope>NUCLEOTIDE SEQUENCE [GENOMIC DNA]</scope>
    <scope>PROTEIN SEQUENCE OF 2-38</scope>
    <source>
        <strain>LM0230</strain>
    </source>
</reference>
<reference key="2">
    <citation type="journal article" date="2001" name="Genome Res.">
        <title>The complete genome sequence of the lactic acid bacterium Lactococcus lactis ssp. lactis IL1403.</title>
        <authorList>
            <person name="Bolotin A."/>
            <person name="Wincker P."/>
            <person name="Mauger S."/>
            <person name="Jaillon O."/>
            <person name="Malarme K."/>
            <person name="Weissenbach J."/>
            <person name="Ehrlich S.D."/>
            <person name="Sorokin A."/>
        </authorList>
    </citation>
    <scope>NUCLEOTIDE SEQUENCE [LARGE SCALE GENOMIC DNA]</scope>
    <source>
        <strain>IL1403</strain>
    </source>
</reference>
<gene>
    <name evidence="1" type="primary">tpiA</name>
    <name type="synonym">tpi</name>
    <name type="ordered locus">LL1134</name>
    <name type="ORF">L0006</name>
</gene>
<feature type="initiator methionine" description="Removed" evidence="2">
    <location>
        <position position="1"/>
    </location>
</feature>
<feature type="chain" id="PRO_0000090233" description="Triosephosphate isomerase">
    <location>
        <begin position="2"/>
        <end position="252"/>
    </location>
</feature>
<feature type="active site" description="Electrophile" evidence="1">
    <location>
        <position position="96"/>
    </location>
</feature>
<feature type="active site" description="Proton acceptor" evidence="1">
    <location>
        <position position="168"/>
    </location>
</feature>
<feature type="binding site" evidence="1">
    <location>
        <begin position="10"/>
        <end position="12"/>
    </location>
    <ligand>
        <name>substrate</name>
    </ligand>
</feature>
<feature type="binding site" evidence="1">
    <location>
        <position position="174"/>
    </location>
    <ligand>
        <name>substrate</name>
    </ligand>
</feature>
<feature type="binding site" evidence="1">
    <location>
        <position position="214"/>
    </location>
    <ligand>
        <name>substrate</name>
    </ligand>
</feature>
<feature type="binding site" evidence="1">
    <location>
        <begin position="235"/>
        <end position="236"/>
    </location>
    <ligand>
        <name>substrate</name>
    </ligand>
</feature>
<feature type="sequence conflict" description="In Ref. 1; AAC43268." evidence="3" ref="1">
    <original>V</original>
    <variation>I</variation>
    <location>
        <position position="89"/>
    </location>
</feature>
<feature type="sequence conflict" description="In Ref. 1; AAC43268." evidence="3" ref="1">
    <original>S</original>
    <variation>T</variation>
    <location>
        <position position="156"/>
    </location>
</feature>
<protein>
    <recommendedName>
        <fullName evidence="1">Triosephosphate isomerase</fullName>
        <shortName evidence="1">TIM</shortName>
        <shortName evidence="1">TPI</shortName>
        <ecNumber evidence="1">5.3.1.1</ecNumber>
    </recommendedName>
    <alternativeName>
        <fullName evidence="1">Triose-phosphate isomerase</fullName>
    </alternativeName>
</protein>
<evidence type="ECO:0000255" key="1">
    <source>
        <dbReference type="HAMAP-Rule" id="MF_00147"/>
    </source>
</evidence>
<evidence type="ECO:0000269" key="2">
    <source>
    </source>
</evidence>
<evidence type="ECO:0000305" key="3"/>
<organism>
    <name type="scientific">Lactococcus lactis subsp. lactis (strain IL1403)</name>
    <name type="common">Streptococcus lactis</name>
    <dbReference type="NCBI Taxonomy" id="272623"/>
    <lineage>
        <taxon>Bacteria</taxon>
        <taxon>Bacillati</taxon>
        <taxon>Bacillota</taxon>
        <taxon>Bacilli</taxon>
        <taxon>Lactobacillales</taxon>
        <taxon>Streptococcaceae</taxon>
        <taxon>Lactococcus</taxon>
    </lineage>
</organism>
<comment type="function">
    <text evidence="1">Involved in the gluconeogenesis. Catalyzes stereospecifically the conversion of dihydroxyacetone phosphate (DHAP) to D-glyceraldehyde-3-phosphate (G3P).</text>
</comment>
<comment type="catalytic activity">
    <reaction evidence="1">
        <text>D-glyceraldehyde 3-phosphate = dihydroxyacetone phosphate</text>
        <dbReference type="Rhea" id="RHEA:18585"/>
        <dbReference type="ChEBI" id="CHEBI:57642"/>
        <dbReference type="ChEBI" id="CHEBI:59776"/>
        <dbReference type="EC" id="5.3.1.1"/>
    </reaction>
</comment>
<comment type="pathway">
    <text evidence="1">Carbohydrate biosynthesis; gluconeogenesis.</text>
</comment>
<comment type="pathway">
    <text evidence="1">Carbohydrate degradation; glycolysis; D-glyceraldehyde 3-phosphate from glycerone phosphate: step 1/1.</text>
</comment>
<comment type="subunit">
    <text evidence="1">Homodimer.</text>
</comment>
<comment type="subcellular location">
    <subcellularLocation>
        <location evidence="1">Cytoplasm</location>
    </subcellularLocation>
</comment>
<comment type="similarity">
    <text evidence="1">Belongs to the triosephosphate isomerase family.</text>
</comment>